<reference key="1">
    <citation type="journal article" date="2001" name="Science">
        <title>Comparative genomics of Listeria species.</title>
        <authorList>
            <person name="Glaser P."/>
            <person name="Frangeul L."/>
            <person name="Buchrieser C."/>
            <person name="Rusniok C."/>
            <person name="Amend A."/>
            <person name="Baquero F."/>
            <person name="Berche P."/>
            <person name="Bloecker H."/>
            <person name="Brandt P."/>
            <person name="Chakraborty T."/>
            <person name="Charbit A."/>
            <person name="Chetouani F."/>
            <person name="Couve E."/>
            <person name="de Daruvar A."/>
            <person name="Dehoux P."/>
            <person name="Domann E."/>
            <person name="Dominguez-Bernal G."/>
            <person name="Duchaud E."/>
            <person name="Durant L."/>
            <person name="Dussurget O."/>
            <person name="Entian K.-D."/>
            <person name="Fsihi H."/>
            <person name="Garcia-del Portillo F."/>
            <person name="Garrido P."/>
            <person name="Gautier L."/>
            <person name="Goebel W."/>
            <person name="Gomez-Lopez N."/>
            <person name="Hain T."/>
            <person name="Hauf J."/>
            <person name="Jackson D."/>
            <person name="Jones L.-M."/>
            <person name="Kaerst U."/>
            <person name="Kreft J."/>
            <person name="Kuhn M."/>
            <person name="Kunst F."/>
            <person name="Kurapkat G."/>
            <person name="Madueno E."/>
            <person name="Maitournam A."/>
            <person name="Mata Vicente J."/>
            <person name="Ng E."/>
            <person name="Nedjari H."/>
            <person name="Nordsiek G."/>
            <person name="Novella S."/>
            <person name="de Pablos B."/>
            <person name="Perez-Diaz J.-C."/>
            <person name="Purcell R."/>
            <person name="Remmel B."/>
            <person name="Rose M."/>
            <person name="Schlueter T."/>
            <person name="Simoes N."/>
            <person name="Tierrez A."/>
            <person name="Vazquez-Boland J.-A."/>
            <person name="Voss H."/>
            <person name="Wehland J."/>
            <person name="Cossart P."/>
        </authorList>
    </citation>
    <scope>NUCLEOTIDE SEQUENCE [LARGE SCALE GENOMIC DNA]</scope>
    <source>
        <strain>ATCC BAA-679 / EGD-e</strain>
    </source>
</reference>
<gene>
    <name evidence="1" type="primary">proS</name>
    <name type="ordered locus">lmo1319</name>
</gene>
<organism>
    <name type="scientific">Listeria monocytogenes serovar 1/2a (strain ATCC BAA-679 / EGD-e)</name>
    <dbReference type="NCBI Taxonomy" id="169963"/>
    <lineage>
        <taxon>Bacteria</taxon>
        <taxon>Bacillati</taxon>
        <taxon>Bacillota</taxon>
        <taxon>Bacilli</taxon>
        <taxon>Bacillales</taxon>
        <taxon>Listeriaceae</taxon>
        <taxon>Listeria</taxon>
    </lineage>
</organism>
<keyword id="KW-0030">Aminoacyl-tRNA synthetase</keyword>
<keyword id="KW-0067">ATP-binding</keyword>
<keyword id="KW-0963">Cytoplasm</keyword>
<keyword id="KW-0436">Ligase</keyword>
<keyword id="KW-0547">Nucleotide-binding</keyword>
<keyword id="KW-0648">Protein biosynthesis</keyword>
<keyword id="KW-1185">Reference proteome</keyword>
<protein>
    <recommendedName>
        <fullName evidence="1">Proline--tRNA ligase</fullName>
        <ecNumber evidence="1">6.1.1.15</ecNumber>
    </recommendedName>
    <alternativeName>
        <fullName evidence="1">Prolyl-tRNA synthetase</fullName>
        <shortName evidence="1">ProRS</shortName>
    </alternativeName>
</protein>
<sequence length="568" mass="63353">MRQTMTFIPTLKEVPADAEVKSHQLLLRAGFIRQTASGIYSYLPLATLMLRKIETIIREELEAIGAAELLMPALQPAELWQESGRWNDYGPELMRLKDRASRDFALGPTHEEVITALLRDEVKSYKRLPLTLYQIQTKFRDEKRPRFGLLRGREFIMKDAYSFHATSESLDEVYNLMHQAYSNIFTRCGLEFRSVIADSGSIGGNESKEFMALSDIGEDTIAYSDASDYAANTEMAPVLYMEKKSHELEKDLEKVATPDQKSITDIVGFLEVPIEKTMKSMLYQVDDEVIMVLVRGDHEVNDIKIKNALDATNVELVDPAVAVELLGANFGSLGPINVPENMRVFADNAVKDIVNAVVGANEDGFHYINVNPDRDFSVTSYFDLRMIQVGDLSPDGQGVIKFAEGIEVGHIFKLGTKYSEAMNATILDENGRAQPIIMGCYGIGVSRILSAIAEQSNDENGFVWDKQISPFDLHLIPVNMKSEEQVAFAETLYTSLQDAGFSVLIDDRAERAGVKFADADLIGLPIRITVGKKAAEGVVEVKIRKTGEMIEVRQDELLNTLPILFGDK</sequence>
<proteinExistence type="inferred from homology"/>
<name>SYP_LISMO</name>
<accession>Q8Y7G2</accession>
<dbReference type="EC" id="6.1.1.15" evidence="1"/>
<dbReference type="EMBL" id="AL591978">
    <property type="protein sequence ID" value="CAC99397.1"/>
    <property type="molecule type" value="Genomic_DNA"/>
</dbReference>
<dbReference type="PIR" id="AG1239">
    <property type="entry name" value="AG1239"/>
</dbReference>
<dbReference type="RefSeq" id="NP_464844.1">
    <property type="nucleotide sequence ID" value="NC_003210.1"/>
</dbReference>
<dbReference type="RefSeq" id="WP_010989734.1">
    <property type="nucleotide sequence ID" value="NZ_CP149495.1"/>
</dbReference>
<dbReference type="SMR" id="Q8Y7G2"/>
<dbReference type="STRING" id="169963.gene:17593976"/>
<dbReference type="PaxDb" id="169963-lmo1319"/>
<dbReference type="EnsemblBacteria" id="CAC99397">
    <property type="protein sequence ID" value="CAC99397"/>
    <property type="gene ID" value="CAC99397"/>
</dbReference>
<dbReference type="GeneID" id="987699"/>
<dbReference type="KEGG" id="lmo:lmo1319"/>
<dbReference type="PATRIC" id="fig|169963.11.peg.1356"/>
<dbReference type="eggNOG" id="COG0442">
    <property type="taxonomic scope" value="Bacteria"/>
</dbReference>
<dbReference type="HOGENOM" id="CLU_016739_0_0_9"/>
<dbReference type="OrthoDB" id="9809052at2"/>
<dbReference type="PhylomeDB" id="Q8Y7G2"/>
<dbReference type="BioCyc" id="LMON169963:LMO1319-MONOMER"/>
<dbReference type="Proteomes" id="UP000000817">
    <property type="component" value="Chromosome"/>
</dbReference>
<dbReference type="GO" id="GO:0005829">
    <property type="term" value="C:cytosol"/>
    <property type="evidence" value="ECO:0000318"/>
    <property type="project" value="GO_Central"/>
</dbReference>
<dbReference type="GO" id="GO:0002161">
    <property type="term" value="F:aminoacyl-tRNA deacylase activity"/>
    <property type="evidence" value="ECO:0007669"/>
    <property type="project" value="InterPro"/>
</dbReference>
<dbReference type="GO" id="GO:0005524">
    <property type="term" value="F:ATP binding"/>
    <property type="evidence" value="ECO:0007669"/>
    <property type="project" value="UniProtKB-UniRule"/>
</dbReference>
<dbReference type="GO" id="GO:0140096">
    <property type="term" value="F:catalytic activity, acting on a protein"/>
    <property type="evidence" value="ECO:0007669"/>
    <property type="project" value="UniProtKB-ARBA"/>
</dbReference>
<dbReference type="GO" id="GO:0004827">
    <property type="term" value="F:proline-tRNA ligase activity"/>
    <property type="evidence" value="ECO:0000318"/>
    <property type="project" value="GO_Central"/>
</dbReference>
<dbReference type="GO" id="GO:0016740">
    <property type="term" value="F:transferase activity"/>
    <property type="evidence" value="ECO:0007669"/>
    <property type="project" value="UniProtKB-ARBA"/>
</dbReference>
<dbReference type="GO" id="GO:0006433">
    <property type="term" value="P:prolyl-tRNA aminoacylation"/>
    <property type="evidence" value="ECO:0000318"/>
    <property type="project" value="GO_Central"/>
</dbReference>
<dbReference type="CDD" id="cd04334">
    <property type="entry name" value="ProRS-INS"/>
    <property type="match status" value="1"/>
</dbReference>
<dbReference type="CDD" id="cd00861">
    <property type="entry name" value="ProRS_anticodon_short"/>
    <property type="match status" value="1"/>
</dbReference>
<dbReference type="CDD" id="cd00779">
    <property type="entry name" value="ProRS_core_prok"/>
    <property type="match status" value="1"/>
</dbReference>
<dbReference type="FunFam" id="3.30.930.10:FF:000043">
    <property type="entry name" value="Proline--tRNA ligase"/>
    <property type="match status" value="1"/>
</dbReference>
<dbReference type="FunFam" id="3.30.930.10:FF:000088">
    <property type="entry name" value="Proline--tRNA ligase"/>
    <property type="match status" value="1"/>
</dbReference>
<dbReference type="FunFam" id="3.40.50.800:FF:000011">
    <property type="entry name" value="Proline--tRNA ligase"/>
    <property type="match status" value="1"/>
</dbReference>
<dbReference type="Gene3D" id="3.40.50.800">
    <property type="entry name" value="Anticodon-binding domain"/>
    <property type="match status" value="1"/>
</dbReference>
<dbReference type="Gene3D" id="3.30.930.10">
    <property type="entry name" value="Bira Bifunctional Protein, Domain 2"/>
    <property type="match status" value="2"/>
</dbReference>
<dbReference type="HAMAP" id="MF_01569">
    <property type="entry name" value="Pro_tRNA_synth_type1"/>
    <property type="match status" value="1"/>
</dbReference>
<dbReference type="InterPro" id="IPR002314">
    <property type="entry name" value="aa-tRNA-synt_IIb"/>
</dbReference>
<dbReference type="InterPro" id="IPR006195">
    <property type="entry name" value="aa-tRNA-synth_II"/>
</dbReference>
<dbReference type="InterPro" id="IPR045864">
    <property type="entry name" value="aa-tRNA-synth_II/BPL/LPL"/>
</dbReference>
<dbReference type="InterPro" id="IPR004154">
    <property type="entry name" value="Anticodon-bd"/>
</dbReference>
<dbReference type="InterPro" id="IPR036621">
    <property type="entry name" value="Anticodon-bd_dom_sf"/>
</dbReference>
<dbReference type="InterPro" id="IPR002316">
    <property type="entry name" value="Pro-tRNA-ligase_IIa"/>
</dbReference>
<dbReference type="InterPro" id="IPR004500">
    <property type="entry name" value="Pro-tRNA-synth_IIa_bac-type"/>
</dbReference>
<dbReference type="InterPro" id="IPR023717">
    <property type="entry name" value="Pro-tRNA-Synthase_IIa_type1"/>
</dbReference>
<dbReference type="InterPro" id="IPR050062">
    <property type="entry name" value="Pro-tRNA_synthetase"/>
</dbReference>
<dbReference type="InterPro" id="IPR044140">
    <property type="entry name" value="ProRS_anticodon_short"/>
</dbReference>
<dbReference type="InterPro" id="IPR033730">
    <property type="entry name" value="ProRS_core_prok"/>
</dbReference>
<dbReference type="InterPro" id="IPR036754">
    <property type="entry name" value="YbaK/aa-tRNA-synt-asso_dom_sf"/>
</dbReference>
<dbReference type="InterPro" id="IPR007214">
    <property type="entry name" value="YbaK/aa-tRNA-synth-assoc-dom"/>
</dbReference>
<dbReference type="NCBIfam" id="NF006625">
    <property type="entry name" value="PRK09194.1"/>
    <property type="match status" value="1"/>
</dbReference>
<dbReference type="NCBIfam" id="TIGR00409">
    <property type="entry name" value="proS_fam_II"/>
    <property type="match status" value="1"/>
</dbReference>
<dbReference type="PANTHER" id="PTHR42753">
    <property type="entry name" value="MITOCHONDRIAL RIBOSOME PROTEIN L39/PROLYL-TRNA LIGASE FAMILY MEMBER"/>
    <property type="match status" value="1"/>
</dbReference>
<dbReference type="PANTHER" id="PTHR42753:SF2">
    <property type="entry name" value="PROLINE--TRNA LIGASE"/>
    <property type="match status" value="1"/>
</dbReference>
<dbReference type="Pfam" id="PF03129">
    <property type="entry name" value="HGTP_anticodon"/>
    <property type="match status" value="1"/>
</dbReference>
<dbReference type="Pfam" id="PF00587">
    <property type="entry name" value="tRNA-synt_2b"/>
    <property type="match status" value="1"/>
</dbReference>
<dbReference type="Pfam" id="PF04073">
    <property type="entry name" value="tRNA_edit"/>
    <property type="match status" value="1"/>
</dbReference>
<dbReference type="PIRSF" id="PIRSF001535">
    <property type="entry name" value="ProRS_1"/>
    <property type="match status" value="1"/>
</dbReference>
<dbReference type="PRINTS" id="PR01046">
    <property type="entry name" value="TRNASYNTHPRO"/>
</dbReference>
<dbReference type="SUPFAM" id="SSF52954">
    <property type="entry name" value="Class II aaRS ABD-related"/>
    <property type="match status" value="1"/>
</dbReference>
<dbReference type="SUPFAM" id="SSF55681">
    <property type="entry name" value="Class II aaRS and biotin synthetases"/>
    <property type="match status" value="1"/>
</dbReference>
<dbReference type="SUPFAM" id="SSF55826">
    <property type="entry name" value="YbaK/ProRS associated domain"/>
    <property type="match status" value="1"/>
</dbReference>
<dbReference type="PROSITE" id="PS50862">
    <property type="entry name" value="AA_TRNA_LIGASE_II"/>
    <property type="match status" value="1"/>
</dbReference>
<evidence type="ECO:0000255" key="1">
    <source>
        <dbReference type="HAMAP-Rule" id="MF_01569"/>
    </source>
</evidence>
<comment type="function">
    <text evidence="1">Catalyzes the attachment of proline to tRNA(Pro) in a two-step reaction: proline is first activated by ATP to form Pro-AMP and then transferred to the acceptor end of tRNA(Pro). As ProRS can inadvertently accommodate and process non-cognate amino acids such as alanine and cysteine, to avoid such errors it has two additional distinct editing activities against alanine. One activity is designated as 'pretransfer' editing and involves the tRNA(Pro)-independent hydrolysis of activated Ala-AMP. The other activity is designated 'posttransfer' editing and involves deacylation of mischarged Ala-tRNA(Pro). The misacylated Cys-tRNA(Pro) is not edited by ProRS.</text>
</comment>
<comment type="catalytic activity">
    <reaction evidence="1">
        <text>tRNA(Pro) + L-proline + ATP = L-prolyl-tRNA(Pro) + AMP + diphosphate</text>
        <dbReference type="Rhea" id="RHEA:14305"/>
        <dbReference type="Rhea" id="RHEA-COMP:9700"/>
        <dbReference type="Rhea" id="RHEA-COMP:9702"/>
        <dbReference type="ChEBI" id="CHEBI:30616"/>
        <dbReference type="ChEBI" id="CHEBI:33019"/>
        <dbReference type="ChEBI" id="CHEBI:60039"/>
        <dbReference type="ChEBI" id="CHEBI:78442"/>
        <dbReference type="ChEBI" id="CHEBI:78532"/>
        <dbReference type="ChEBI" id="CHEBI:456215"/>
        <dbReference type="EC" id="6.1.1.15"/>
    </reaction>
</comment>
<comment type="subunit">
    <text evidence="1">Homodimer.</text>
</comment>
<comment type="subcellular location">
    <subcellularLocation>
        <location evidence="1">Cytoplasm</location>
    </subcellularLocation>
</comment>
<comment type="domain">
    <text evidence="1">Consists of three domains: the N-terminal catalytic domain, the editing domain and the C-terminal anticodon-binding domain.</text>
</comment>
<comment type="similarity">
    <text evidence="1">Belongs to the class-II aminoacyl-tRNA synthetase family. ProS type 1 subfamily.</text>
</comment>
<feature type="chain" id="PRO_0000248719" description="Proline--tRNA ligase">
    <location>
        <begin position="1"/>
        <end position="568"/>
    </location>
</feature>